<comment type="function">
    <text evidence="1">One of two assembly initiator proteins, it binds directly to the 5'-end of the 23S rRNA, where it nucleates assembly of the 50S subunit.</text>
</comment>
<comment type="function">
    <text evidence="1">One of the proteins that surrounds the polypeptide exit tunnel on the outside of the subunit.</text>
</comment>
<comment type="subunit">
    <text evidence="1">Part of the 50S ribosomal subunit.</text>
</comment>
<comment type="similarity">
    <text evidence="1">Belongs to the universal ribosomal protein uL24 family.</text>
</comment>
<feature type="chain" id="PRO_1000086502" description="Large ribosomal subunit protein uL24">
    <location>
        <begin position="1"/>
        <end position="101"/>
    </location>
</feature>
<name>RL24_STRGC</name>
<organism>
    <name type="scientific">Streptococcus gordonii (strain Challis / ATCC 35105 / BCRC 15272 / CH1 / DL1 / V288)</name>
    <dbReference type="NCBI Taxonomy" id="467705"/>
    <lineage>
        <taxon>Bacteria</taxon>
        <taxon>Bacillati</taxon>
        <taxon>Bacillota</taxon>
        <taxon>Bacilli</taxon>
        <taxon>Lactobacillales</taxon>
        <taxon>Streptococcaceae</taxon>
        <taxon>Streptococcus</taxon>
    </lineage>
</organism>
<reference key="1">
    <citation type="journal article" date="2007" name="J. Bacteriol.">
        <title>Genome-wide transcriptional changes in Streptococcus gordonii in response to competence signaling peptide.</title>
        <authorList>
            <person name="Vickerman M.M."/>
            <person name="Iobst S."/>
            <person name="Jesionowski A.M."/>
            <person name="Gill S.R."/>
        </authorList>
    </citation>
    <scope>NUCLEOTIDE SEQUENCE [LARGE SCALE GENOMIC DNA]</scope>
    <source>
        <strain>Challis / ATCC 35105 / BCRC 15272 / CH1 / DL1 / V288</strain>
    </source>
</reference>
<evidence type="ECO:0000255" key="1">
    <source>
        <dbReference type="HAMAP-Rule" id="MF_01326"/>
    </source>
</evidence>
<evidence type="ECO:0000305" key="2"/>
<accession>A8AZL4</accession>
<sequence length="101" mass="11010">MFVKKGDKVRVIAGKDKGVEALVVTALPKVNKVVVEGVNIVKKHQKPNNEHPQGAIVEKEAPIHVSNVQVLDKNGVAGRVGYKFVDGKKVRYNKKSGEVLD</sequence>
<proteinExistence type="inferred from homology"/>
<keyword id="KW-1185">Reference proteome</keyword>
<keyword id="KW-0687">Ribonucleoprotein</keyword>
<keyword id="KW-0689">Ribosomal protein</keyword>
<keyword id="KW-0694">RNA-binding</keyword>
<keyword id="KW-0699">rRNA-binding</keyword>
<gene>
    <name evidence="1" type="primary">rplX</name>
    <name type="ordered locus">SGO_1974</name>
</gene>
<protein>
    <recommendedName>
        <fullName evidence="1">Large ribosomal subunit protein uL24</fullName>
    </recommendedName>
    <alternativeName>
        <fullName evidence="2">50S ribosomal protein L24</fullName>
    </alternativeName>
</protein>
<dbReference type="EMBL" id="CP000725">
    <property type="protein sequence ID" value="ABV10723.1"/>
    <property type="molecule type" value="Genomic_DNA"/>
</dbReference>
<dbReference type="RefSeq" id="WP_008809903.1">
    <property type="nucleotide sequence ID" value="NC_009785.1"/>
</dbReference>
<dbReference type="SMR" id="A8AZL4"/>
<dbReference type="STRING" id="467705.SGO_1974"/>
<dbReference type="GeneID" id="93786853"/>
<dbReference type="KEGG" id="sgo:SGO_1974"/>
<dbReference type="eggNOG" id="COG0198">
    <property type="taxonomic scope" value="Bacteria"/>
</dbReference>
<dbReference type="HOGENOM" id="CLU_093315_2_0_9"/>
<dbReference type="Proteomes" id="UP000001131">
    <property type="component" value="Chromosome"/>
</dbReference>
<dbReference type="GO" id="GO:1990904">
    <property type="term" value="C:ribonucleoprotein complex"/>
    <property type="evidence" value="ECO:0007669"/>
    <property type="project" value="UniProtKB-KW"/>
</dbReference>
<dbReference type="GO" id="GO:0005840">
    <property type="term" value="C:ribosome"/>
    <property type="evidence" value="ECO:0007669"/>
    <property type="project" value="UniProtKB-KW"/>
</dbReference>
<dbReference type="GO" id="GO:0019843">
    <property type="term" value="F:rRNA binding"/>
    <property type="evidence" value="ECO:0007669"/>
    <property type="project" value="UniProtKB-UniRule"/>
</dbReference>
<dbReference type="GO" id="GO:0003735">
    <property type="term" value="F:structural constituent of ribosome"/>
    <property type="evidence" value="ECO:0007669"/>
    <property type="project" value="InterPro"/>
</dbReference>
<dbReference type="GO" id="GO:0006412">
    <property type="term" value="P:translation"/>
    <property type="evidence" value="ECO:0007669"/>
    <property type="project" value="UniProtKB-UniRule"/>
</dbReference>
<dbReference type="CDD" id="cd06089">
    <property type="entry name" value="KOW_RPL26"/>
    <property type="match status" value="1"/>
</dbReference>
<dbReference type="FunFam" id="2.30.30.30:FF:000004">
    <property type="entry name" value="50S ribosomal protein L24"/>
    <property type="match status" value="1"/>
</dbReference>
<dbReference type="Gene3D" id="2.30.30.30">
    <property type="match status" value="1"/>
</dbReference>
<dbReference type="HAMAP" id="MF_01326_B">
    <property type="entry name" value="Ribosomal_uL24_B"/>
    <property type="match status" value="1"/>
</dbReference>
<dbReference type="InterPro" id="IPR005824">
    <property type="entry name" value="KOW"/>
</dbReference>
<dbReference type="InterPro" id="IPR014722">
    <property type="entry name" value="Rib_uL2_dom2"/>
</dbReference>
<dbReference type="InterPro" id="IPR003256">
    <property type="entry name" value="Ribosomal_uL24"/>
</dbReference>
<dbReference type="InterPro" id="IPR005825">
    <property type="entry name" value="Ribosomal_uL24_CS"/>
</dbReference>
<dbReference type="InterPro" id="IPR041988">
    <property type="entry name" value="Ribosomal_uL24_KOW"/>
</dbReference>
<dbReference type="InterPro" id="IPR008991">
    <property type="entry name" value="Translation_prot_SH3-like_sf"/>
</dbReference>
<dbReference type="NCBIfam" id="TIGR01079">
    <property type="entry name" value="rplX_bact"/>
    <property type="match status" value="1"/>
</dbReference>
<dbReference type="PANTHER" id="PTHR12903">
    <property type="entry name" value="MITOCHONDRIAL RIBOSOMAL PROTEIN L24"/>
    <property type="match status" value="1"/>
</dbReference>
<dbReference type="Pfam" id="PF00467">
    <property type="entry name" value="KOW"/>
    <property type="match status" value="1"/>
</dbReference>
<dbReference type="Pfam" id="PF17136">
    <property type="entry name" value="ribosomal_L24"/>
    <property type="match status" value="1"/>
</dbReference>
<dbReference type="SMART" id="SM00739">
    <property type="entry name" value="KOW"/>
    <property type="match status" value="1"/>
</dbReference>
<dbReference type="SUPFAM" id="SSF50104">
    <property type="entry name" value="Translation proteins SH3-like domain"/>
    <property type="match status" value="1"/>
</dbReference>
<dbReference type="PROSITE" id="PS01108">
    <property type="entry name" value="RIBOSOMAL_L24"/>
    <property type="match status" value="1"/>
</dbReference>